<accession>O35815</accession>
<protein>
    <recommendedName>
        <fullName>Ataxin-3</fullName>
        <ecNumber>3.4.19.12</ecNumber>
    </recommendedName>
    <alternativeName>
        <fullName>Machado-Joseph disease protein 1 homolog</fullName>
    </alternativeName>
</protein>
<feature type="chain" id="PRO_0000053833" description="Ataxin-3">
    <location>
        <begin position="1"/>
        <end position="355"/>
    </location>
</feature>
<feature type="domain" description="Josephin" evidence="5">
    <location>
        <begin position="1"/>
        <end position="180"/>
    </location>
</feature>
<feature type="domain" description="UIM 1" evidence="4">
    <location>
        <begin position="224"/>
        <end position="243"/>
    </location>
</feature>
<feature type="domain" description="UIM 2" evidence="4">
    <location>
        <begin position="244"/>
        <end position="263"/>
    </location>
</feature>
<feature type="domain" description="UIM 3" evidence="4">
    <location>
        <begin position="329"/>
        <end position="348"/>
    </location>
</feature>
<feature type="region of interest" description="Disordered" evidence="6">
    <location>
        <begin position="257"/>
        <end position="333"/>
    </location>
</feature>
<feature type="compositionally biased region" description="Basic and acidic residues" evidence="6">
    <location>
        <begin position="279"/>
        <end position="301"/>
    </location>
</feature>
<feature type="compositionally biased region" description="Polar residues" evidence="6">
    <location>
        <begin position="312"/>
        <end position="326"/>
    </location>
</feature>
<feature type="active site" description="Nucleophile" evidence="2">
    <location>
        <position position="14"/>
    </location>
</feature>
<feature type="active site" description="Proton acceptor" evidence="5">
    <location>
        <position position="119"/>
    </location>
</feature>
<feature type="active site" evidence="5">
    <location>
        <position position="134"/>
    </location>
</feature>
<feature type="modified residue" description="Phosphoserine" evidence="3">
    <location>
        <position position="268"/>
    </location>
</feature>
<feature type="modified residue" description="Phosphoserine" evidence="3">
    <location>
        <position position="272"/>
    </location>
</feature>
<feature type="modified residue" description="Phosphoserine" evidence="3">
    <location>
        <position position="273"/>
    </location>
</feature>
<feature type="modified residue" description="Phosphoserine" evidence="3">
    <location>
        <position position="321"/>
    </location>
</feature>
<feature type="cross-link" description="Peptide (Met-Gly) (interchain with G-Cter in ubiquitin)" evidence="1">
    <location>
        <position position="1"/>
    </location>
</feature>
<feature type="cross-link" description="Glycyl lysine isopeptide (Lys-Gly) (interchain with G-Cter in ubiquitin)" evidence="2">
    <location>
        <position position="200"/>
    </location>
</feature>
<feature type="mutagenesis site" description="Loss of enzyme activity." evidence="8">
    <original>C</original>
    <variation>A</variation>
    <variation>S</variation>
    <location>
        <position position="14"/>
    </location>
</feature>
<feature type="mutagenesis site" description="Loss of enzyme activity." evidence="8">
    <original>H</original>
    <variation>A</variation>
    <location>
        <position position="119"/>
    </location>
</feature>
<feature type="mutagenesis site" description="Loss of enzyme activity." evidence="8">
    <original>N</original>
    <variation>A</variation>
    <location>
        <position position="134"/>
    </location>
</feature>
<comment type="function">
    <text evidence="2 3 8">Deubiquitinating enzyme involved in protein homeostasis maintenance, transcription, cytoskeleton regulation, myogenesis and degradation of misfolded chaperone substrates (PubMed:17696782). Binds long polyubiquitin chains and trims them, while it has weak or no activity against chains of 4 or less ubiquitins (By similarity). Involved in degradation of misfolded chaperone substrates via its interaction with STUB1/CHIP: recruited to monoubiquitinated STUB1/CHIP, and restricts the length of ubiquitin chain attached to STUB1/CHIP substrates and preventing further chain extension (By similarity). Interacts with key regulators of transcription and represses transcription: acts as a histone-binding protein that regulates transcription (By similarity). Acts as a negative regulator of mTORC1 signaling in response to amino acid deprivation by mediating deubiquitination of RHEB, thereby promoting RHEB inactivation by the TSC-TBC complex (By similarity). Regulates autophagy via the deubiquitination of 'Lys-402' of BECN1 leading to the stabilization of BECN1 (By similarity).</text>
</comment>
<comment type="catalytic activity">
    <reaction evidence="8">
        <text>Thiol-dependent hydrolysis of ester, thioester, amide, peptide and isopeptide bonds formed by the C-terminal Gly of ubiquitin (a 76-residue protein attached to proteins as an intracellular targeting signal).</text>
        <dbReference type="EC" id="3.4.19.12"/>
    </reaction>
</comment>
<comment type="subunit">
    <text evidence="2 3">Interacts with STUB1/CHIP (when monoubiquitinated) (By similarity). Interacts with DNA repair proteins RAD23A and RAD23B. Interacts with BECN1 (via its poly-Gln domain) (By similarity). Interacts with PRKN, UBR2, VCP and tubulin (By similarity).</text>
</comment>
<comment type="subcellular location">
    <subcellularLocation>
        <location evidence="2">Nucleus matrix</location>
    </subcellularLocation>
    <subcellularLocation>
        <location evidence="2">Nucleus</location>
    </subcellularLocation>
    <subcellularLocation>
        <location evidence="2">Lysosome membrane</location>
        <topology evidence="2">Peripheral membrane protein</topology>
    </subcellularLocation>
    <text evidence="2">Predominantly nuclear, but not exclusively, inner nuclear matrix. Recruited to lysosomal membrane in response to amino acid deprivation by the RagA/RRAGA-RagB/RRAGB complex.</text>
</comment>
<comment type="tissue specificity">
    <text evidence="7">Ubiquitously expressed (PubMed:10732811).</text>
</comment>
<comment type="domain">
    <text evidence="3">The UIM domains bind ubiquitin and interact with various E3 ubiquitin-protein ligase, such as STUB1/CHIP (By similarity). They are essential to limit the length of ubiquitin chains (By similarity).</text>
</comment>
<comment type="PTM">
    <text evidence="2">Monoubiquitinated by UBE2W, possibly leading to activate the deubiquitinating enzyme activity (By similarity).</text>
</comment>
<proteinExistence type="evidence at protein level"/>
<name>ATX3_RAT</name>
<organism>
    <name type="scientific">Rattus norvegicus</name>
    <name type="common">Rat</name>
    <dbReference type="NCBI Taxonomy" id="10116"/>
    <lineage>
        <taxon>Eukaryota</taxon>
        <taxon>Metazoa</taxon>
        <taxon>Chordata</taxon>
        <taxon>Craniata</taxon>
        <taxon>Vertebrata</taxon>
        <taxon>Euteleostomi</taxon>
        <taxon>Mammalia</taxon>
        <taxon>Eutheria</taxon>
        <taxon>Euarchontoglires</taxon>
        <taxon>Glires</taxon>
        <taxon>Rodentia</taxon>
        <taxon>Myomorpha</taxon>
        <taxon>Muroidea</taxon>
        <taxon>Muridae</taxon>
        <taxon>Murinae</taxon>
        <taxon>Rattus</taxon>
    </lineage>
</organism>
<gene>
    <name type="primary">Atxn3</name>
    <name type="synonym">Mjd</name>
    <name type="synonym">Sca3</name>
</gene>
<dbReference type="EC" id="3.4.19.12"/>
<dbReference type="EMBL" id="Y12319">
    <property type="protein sequence ID" value="CAA72986.1"/>
    <property type="molecule type" value="mRNA"/>
</dbReference>
<dbReference type="RefSeq" id="NP_067734.1">
    <property type="nucleotide sequence ID" value="NM_021702.2"/>
</dbReference>
<dbReference type="BMRB" id="O35815"/>
<dbReference type="SMR" id="O35815"/>
<dbReference type="BioGRID" id="248780">
    <property type="interactions" value="2"/>
</dbReference>
<dbReference type="FunCoup" id="O35815">
    <property type="interactions" value="2855"/>
</dbReference>
<dbReference type="STRING" id="10116.ENSRNOP00000007505"/>
<dbReference type="MEROPS" id="C86.001"/>
<dbReference type="iPTMnet" id="O35815"/>
<dbReference type="PhosphoSitePlus" id="O35815"/>
<dbReference type="jPOST" id="O35815"/>
<dbReference type="PaxDb" id="10116-ENSRNOP00000007505"/>
<dbReference type="Ensembl" id="ENSRNOT00000007505.3">
    <property type="protein sequence ID" value="ENSRNOP00000007505.1"/>
    <property type="gene ID" value="ENSRNOG00000005470.3"/>
</dbReference>
<dbReference type="GeneID" id="60331"/>
<dbReference type="KEGG" id="rno:60331"/>
<dbReference type="UCSC" id="RGD:621567">
    <property type="organism name" value="rat"/>
</dbReference>
<dbReference type="AGR" id="RGD:621567"/>
<dbReference type="CTD" id="4287"/>
<dbReference type="RGD" id="621567">
    <property type="gene designation" value="Atxn3"/>
</dbReference>
<dbReference type="eggNOG" id="KOG2935">
    <property type="taxonomic scope" value="Eukaryota"/>
</dbReference>
<dbReference type="GeneTree" id="ENSGT00390000001830"/>
<dbReference type="HOGENOM" id="CLU_031228_1_0_1"/>
<dbReference type="InParanoid" id="O35815"/>
<dbReference type="PhylomeDB" id="O35815"/>
<dbReference type="TreeFam" id="TF314228"/>
<dbReference type="Reactome" id="R-RNO-5689877">
    <property type="pathway name" value="Josephin domain DUBs"/>
</dbReference>
<dbReference type="Reactome" id="R-RNO-9615017">
    <property type="pathway name" value="FOXO-mediated transcription of oxidative stress, metabolic and neuronal genes"/>
</dbReference>
<dbReference type="PRO" id="PR:O35815"/>
<dbReference type="Proteomes" id="UP000002494">
    <property type="component" value="Chromosome 6"/>
</dbReference>
<dbReference type="Bgee" id="ENSRNOG00000005470">
    <property type="expression patterns" value="Expressed in testis and 19 other cell types or tissues"/>
</dbReference>
<dbReference type="GO" id="GO:0005737">
    <property type="term" value="C:cytoplasm"/>
    <property type="evidence" value="ECO:0000266"/>
    <property type="project" value="RGD"/>
</dbReference>
<dbReference type="GO" id="GO:0005829">
    <property type="term" value="C:cytosol"/>
    <property type="evidence" value="ECO:0000250"/>
    <property type="project" value="ParkinsonsUK-UCL"/>
</dbReference>
<dbReference type="GO" id="GO:0005789">
    <property type="term" value="C:endoplasmic reticulum membrane"/>
    <property type="evidence" value="ECO:0000266"/>
    <property type="project" value="RGD"/>
</dbReference>
<dbReference type="GO" id="GO:0005765">
    <property type="term" value="C:lysosomal membrane"/>
    <property type="evidence" value="ECO:0000250"/>
    <property type="project" value="UniProtKB"/>
</dbReference>
<dbReference type="GO" id="GO:0005759">
    <property type="term" value="C:mitochondrial matrix"/>
    <property type="evidence" value="ECO:0000266"/>
    <property type="project" value="RGD"/>
</dbReference>
<dbReference type="GO" id="GO:0031966">
    <property type="term" value="C:mitochondrial membrane"/>
    <property type="evidence" value="ECO:0000266"/>
    <property type="project" value="RGD"/>
</dbReference>
<dbReference type="GO" id="GO:0042405">
    <property type="term" value="C:nuclear inclusion body"/>
    <property type="evidence" value="ECO:0000266"/>
    <property type="project" value="RGD"/>
</dbReference>
<dbReference type="GO" id="GO:0016363">
    <property type="term" value="C:nuclear matrix"/>
    <property type="evidence" value="ECO:0007669"/>
    <property type="project" value="UniProtKB-SubCell"/>
</dbReference>
<dbReference type="GO" id="GO:0005634">
    <property type="term" value="C:nucleus"/>
    <property type="evidence" value="ECO:0000266"/>
    <property type="project" value="RGD"/>
</dbReference>
<dbReference type="GO" id="GO:0051117">
    <property type="term" value="F:ATPase binding"/>
    <property type="evidence" value="ECO:0000250"/>
    <property type="project" value="ParkinsonsUK-UCL"/>
</dbReference>
<dbReference type="GO" id="GO:0004843">
    <property type="term" value="F:cysteine-type deubiquitinase activity"/>
    <property type="evidence" value="ECO:0000250"/>
    <property type="project" value="UniProtKB"/>
</dbReference>
<dbReference type="GO" id="GO:0042826">
    <property type="term" value="F:histone deacetylase binding"/>
    <property type="evidence" value="ECO:0000353"/>
    <property type="project" value="RGD"/>
</dbReference>
<dbReference type="GO" id="GO:0042802">
    <property type="term" value="F:identical protein binding"/>
    <property type="evidence" value="ECO:0000250"/>
    <property type="project" value="ParkinsonsUK-UCL"/>
</dbReference>
<dbReference type="GO" id="GO:1990380">
    <property type="term" value="F:K48-linked deubiquitinase activity"/>
    <property type="evidence" value="ECO:0000250"/>
    <property type="project" value="ParkinsonsUK-UCL"/>
</dbReference>
<dbReference type="GO" id="GO:0061578">
    <property type="term" value="F:K63-linked deubiquitinase activity"/>
    <property type="evidence" value="ECO:0000250"/>
    <property type="project" value="ParkinsonsUK-UCL"/>
</dbReference>
<dbReference type="GO" id="GO:0000977">
    <property type="term" value="F:RNA polymerase II transcription regulatory region sequence-specific DNA binding"/>
    <property type="evidence" value="ECO:0000314"/>
    <property type="project" value="RGD"/>
</dbReference>
<dbReference type="GO" id="GO:0001222">
    <property type="term" value="F:transcription corepressor binding"/>
    <property type="evidence" value="ECO:0000353"/>
    <property type="project" value="RGD"/>
</dbReference>
<dbReference type="GO" id="GO:0031625">
    <property type="term" value="F:ubiquitin protein ligase binding"/>
    <property type="evidence" value="ECO:0000250"/>
    <property type="project" value="UniProtKB"/>
</dbReference>
<dbReference type="GO" id="GO:0030036">
    <property type="term" value="P:actin cytoskeleton organization"/>
    <property type="evidence" value="ECO:0000250"/>
    <property type="project" value="ParkinsonsUK-UCL"/>
</dbReference>
<dbReference type="GO" id="GO:0034198">
    <property type="term" value="P:cellular response to amino acid starvation"/>
    <property type="evidence" value="ECO:0000250"/>
    <property type="project" value="UniProtKB"/>
</dbReference>
<dbReference type="GO" id="GO:0034605">
    <property type="term" value="P:cellular response to heat"/>
    <property type="evidence" value="ECO:0000266"/>
    <property type="project" value="RGD"/>
</dbReference>
<dbReference type="GO" id="GO:0071218">
    <property type="term" value="P:cellular response to misfolded protein"/>
    <property type="evidence" value="ECO:0000250"/>
    <property type="project" value="UniProtKB"/>
</dbReference>
<dbReference type="GO" id="GO:0035640">
    <property type="term" value="P:exploration behavior"/>
    <property type="evidence" value="ECO:0000266"/>
    <property type="project" value="RGD"/>
</dbReference>
<dbReference type="GO" id="GO:0045104">
    <property type="term" value="P:intermediate filament cytoskeleton organization"/>
    <property type="evidence" value="ECO:0000250"/>
    <property type="project" value="ParkinsonsUK-UCL"/>
</dbReference>
<dbReference type="GO" id="GO:0000226">
    <property type="term" value="P:microtubule cytoskeleton organization"/>
    <property type="evidence" value="ECO:0000250"/>
    <property type="project" value="ParkinsonsUK-UCL"/>
</dbReference>
<dbReference type="GO" id="GO:0035520">
    <property type="term" value="P:monoubiquitinated protein deubiquitination"/>
    <property type="evidence" value="ECO:0000250"/>
    <property type="project" value="UniProtKB"/>
</dbReference>
<dbReference type="GO" id="GO:1904262">
    <property type="term" value="P:negative regulation of TORC1 signaling"/>
    <property type="evidence" value="ECO:0000250"/>
    <property type="project" value="UniProtKB"/>
</dbReference>
<dbReference type="GO" id="GO:1904294">
    <property type="term" value="P:positive regulation of ERAD pathway"/>
    <property type="evidence" value="ECO:0000266"/>
    <property type="project" value="RGD"/>
</dbReference>
<dbReference type="GO" id="GO:2000060">
    <property type="term" value="P:positive regulation of ubiquitin-dependent protein catabolic process"/>
    <property type="evidence" value="ECO:0000266"/>
    <property type="project" value="RGD"/>
</dbReference>
<dbReference type="GO" id="GO:0043161">
    <property type="term" value="P:proteasome-mediated ubiquitin-dependent protein catabolic process"/>
    <property type="evidence" value="ECO:0000250"/>
    <property type="project" value="UniProtKB"/>
</dbReference>
<dbReference type="GO" id="GO:0071108">
    <property type="term" value="P:protein K48-linked deubiquitination"/>
    <property type="evidence" value="ECO:0000250"/>
    <property type="project" value="ParkinsonsUK-UCL"/>
</dbReference>
<dbReference type="GO" id="GO:0070536">
    <property type="term" value="P:protein K63-linked deubiquitination"/>
    <property type="evidence" value="ECO:0000250"/>
    <property type="project" value="ParkinsonsUK-UCL"/>
</dbReference>
<dbReference type="GO" id="GO:1904327">
    <property type="term" value="P:protein localization to cytosolic proteasome complex"/>
    <property type="evidence" value="ECO:0000266"/>
    <property type="project" value="RGD"/>
</dbReference>
<dbReference type="GO" id="GO:0036211">
    <property type="term" value="P:protein modification process"/>
    <property type="evidence" value="ECO:0000314"/>
    <property type="project" value="RGD"/>
</dbReference>
<dbReference type="GO" id="GO:0006515">
    <property type="term" value="P:protein quality control for misfolded or incompletely synthesized proteins"/>
    <property type="evidence" value="ECO:0000250"/>
    <property type="project" value="UniProtKB"/>
</dbReference>
<dbReference type="GO" id="GO:0010810">
    <property type="term" value="P:regulation of cell-substrate adhesion"/>
    <property type="evidence" value="ECO:0000250"/>
    <property type="project" value="ParkinsonsUK-UCL"/>
</dbReference>
<dbReference type="GO" id="GO:0006511">
    <property type="term" value="P:ubiquitin-dependent protein catabolic process"/>
    <property type="evidence" value="ECO:0000266"/>
    <property type="project" value="RGD"/>
</dbReference>
<dbReference type="FunFam" id="3.90.70.40:FF:000005">
    <property type="entry name" value="Ataxin 3"/>
    <property type="match status" value="1"/>
</dbReference>
<dbReference type="FunFam" id="1.10.287.10:FF:000005">
    <property type="entry name" value="ataxin-3 isoform X1"/>
    <property type="match status" value="1"/>
</dbReference>
<dbReference type="Gene3D" id="3.90.70.40">
    <property type="match status" value="1"/>
</dbReference>
<dbReference type="Gene3D" id="1.10.287.10">
    <property type="entry name" value="S15/NS1, RNA-binding"/>
    <property type="match status" value="1"/>
</dbReference>
<dbReference type="InterPro" id="IPR033865">
    <property type="entry name" value="Ataxin-3"/>
</dbReference>
<dbReference type="InterPro" id="IPR006155">
    <property type="entry name" value="Josephin"/>
</dbReference>
<dbReference type="InterPro" id="IPR003903">
    <property type="entry name" value="UIM_dom"/>
</dbReference>
<dbReference type="PANTHER" id="PTHR14159">
    <property type="entry name" value="ATAXIN-3-RELATED"/>
    <property type="match status" value="1"/>
</dbReference>
<dbReference type="PANTHER" id="PTHR14159:SF0">
    <property type="entry name" value="ATAXIN-3-RELATED"/>
    <property type="match status" value="1"/>
</dbReference>
<dbReference type="Pfam" id="PF02099">
    <property type="entry name" value="Josephin"/>
    <property type="match status" value="1"/>
</dbReference>
<dbReference type="Pfam" id="PF16619">
    <property type="entry name" value="SUIM_assoc"/>
    <property type="match status" value="1"/>
</dbReference>
<dbReference type="Pfam" id="PF02809">
    <property type="entry name" value="UIM"/>
    <property type="match status" value="3"/>
</dbReference>
<dbReference type="PRINTS" id="PR01233">
    <property type="entry name" value="JOSEPHIN"/>
</dbReference>
<dbReference type="SMART" id="SM01246">
    <property type="entry name" value="Josephin"/>
    <property type="match status" value="1"/>
</dbReference>
<dbReference type="SMART" id="SM00726">
    <property type="entry name" value="UIM"/>
    <property type="match status" value="3"/>
</dbReference>
<dbReference type="PROSITE" id="PS50957">
    <property type="entry name" value="JOSEPHIN"/>
    <property type="match status" value="1"/>
</dbReference>
<dbReference type="PROSITE" id="PS50330">
    <property type="entry name" value="UIM"/>
    <property type="match status" value="2"/>
</dbReference>
<evidence type="ECO:0000250" key="1"/>
<evidence type="ECO:0000250" key="2">
    <source>
        <dbReference type="UniProtKB" id="P54252"/>
    </source>
</evidence>
<evidence type="ECO:0000250" key="3">
    <source>
        <dbReference type="UniProtKB" id="Q9CVD2"/>
    </source>
</evidence>
<evidence type="ECO:0000255" key="4">
    <source>
        <dbReference type="PROSITE-ProRule" id="PRU00213"/>
    </source>
</evidence>
<evidence type="ECO:0000255" key="5">
    <source>
        <dbReference type="PROSITE-ProRule" id="PRU00331"/>
    </source>
</evidence>
<evidence type="ECO:0000256" key="6">
    <source>
        <dbReference type="SAM" id="MobiDB-lite"/>
    </source>
</evidence>
<evidence type="ECO:0000269" key="7">
    <source>
    </source>
</evidence>
<evidence type="ECO:0000269" key="8">
    <source>
    </source>
</evidence>
<reference key="1">
    <citation type="journal article" date="1997" name="Neurogenetics">
        <title>Characterization of the rat spinocerebellar ataxia type 3 gene.</title>
        <authorList>
            <person name="Schmitt I."/>
            <person name="Brattig T."/>
            <person name="Gossen M."/>
            <person name="Riess O."/>
        </authorList>
    </citation>
    <scope>NUCLEOTIDE SEQUENCE [MRNA]</scope>
    <scope>TISSUE SPECIFICITY</scope>
    <source>
        <tissue>Brain</tissue>
        <tissue>Testis</tissue>
    </source>
</reference>
<reference key="2">
    <citation type="journal article" date="2007" name="Biol. Chem.">
        <title>Josephin domain-containing proteins from a variety of species are active de-ubiquitination enzymes.</title>
        <authorList>
            <person name="Tzvetkov N."/>
            <person name="Breuer P."/>
        </authorList>
    </citation>
    <scope>CATALYTIC ACTIVITY</scope>
    <scope>MUTAGENESIS OF CYS-14; HIS-119 AND ASN-134</scope>
    <scope>FUNCTION</scope>
</reference>
<reference key="3">
    <citation type="journal article" date="2012" name="Nat. Commun.">
        <title>Quantitative maps of protein phosphorylation sites across 14 different rat organs and tissues.</title>
        <authorList>
            <person name="Lundby A."/>
            <person name="Secher A."/>
            <person name="Lage K."/>
            <person name="Nordsborg N.B."/>
            <person name="Dmytriyev A."/>
            <person name="Lundby C."/>
            <person name="Olsen J.V."/>
        </authorList>
    </citation>
    <scope>IDENTIFICATION BY MASS SPECTROMETRY [LARGE SCALE ANALYSIS]</scope>
</reference>
<reference key="4">
    <citation type="journal article" date="2003" name="Proteins">
        <title>Structural modeling of ataxin-3 reveals distant homology to adaptins.</title>
        <authorList>
            <person name="Albrecht M."/>
            <person name="Hoffmann D."/>
            <person name="Evert B.O."/>
            <person name="Schmitt I."/>
            <person name="Wuellner U."/>
            <person name="Lengauer T."/>
        </authorList>
    </citation>
    <scope>3D-STRUCTURE MODELING</scope>
</reference>
<keyword id="KW-0378">Hydrolase</keyword>
<keyword id="KW-1017">Isopeptide bond</keyword>
<keyword id="KW-0458">Lysosome</keyword>
<keyword id="KW-0472">Membrane</keyword>
<keyword id="KW-0539">Nucleus</keyword>
<keyword id="KW-0597">Phosphoprotein</keyword>
<keyword id="KW-0645">Protease</keyword>
<keyword id="KW-1185">Reference proteome</keyword>
<keyword id="KW-0677">Repeat</keyword>
<keyword id="KW-0788">Thiol protease</keyword>
<keyword id="KW-0804">Transcription</keyword>
<keyword id="KW-0805">Transcription regulation</keyword>
<keyword id="KW-0832">Ubl conjugation</keyword>
<keyword id="KW-0833">Ubl conjugation pathway</keyword>
<sequence length="355" mass="40446">MESIFHEKQEGSLCAQHCLNNLLQGEYFSPVELSSIAHQLDEEERLRMAEGGVTSEDYRTFLQQPSGNMDDSGFFSIQVISNALKVWGLELILFNSPEYQRLRIDPINERSFICNYKEHWFTVRKLGKQWFNLNSLLTGPELISDTYLALFLAQLQQEGYSIFVVKGDLPDCEADQLLQMIKVQQMHRPKLIGEELAHLKEQSALKADLERVLEAADGPGMFDDDEDDLQRALAMSRQEIDMEDEEADLRRAIQLSMQGSSRGMCEDSPQTSSTDLSSEELRKRREAYFEKQQHQQQEADRPGYLSYPCERPTTSSGGLRSNQAGNAMSEEDVLRATVTVSLETAKDSLKAERKK</sequence>